<gene>
    <name type="primary">GP16</name>
</gene>
<feature type="chain" id="PRO_0000132886" description="Glycoprotein GP16">
    <location>
        <begin position="1"/>
        <end position="106"/>
    </location>
</feature>
<organism>
    <name type="scientific">Autographa californica nuclear polyhedrosis virus</name>
    <name type="common">AcMNPV</name>
    <dbReference type="NCBI Taxonomy" id="46015"/>
    <lineage>
        <taxon>Viruses</taxon>
        <taxon>Viruses incertae sedis</taxon>
        <taxon>Naldaviricetes</taxon>
        <taxon>Lefavirales</taxon>
        <taxon>Baculoviridae</taxon>
        <taxon>Alphabaculovirus</taxon>
        <taxon>Alphabaculovirus aucalifornicae</taxon>
    </lineage>
</organism>
<name>GP16_NPVAC</name>
<organismHost>
    <name type="scientific">Lepidoptera</name>
    <name type="common">butterflies and moths</name>
    <dbReference type="NCBI Taxonomy" id="7088"/>
</organismHost>
<evidence type="ECO:0000269" key="1">
    <source>
    </source>
</evidence>
<evidence type="ECO:0000269" key="2">
    <source>
    </source>
</evidence>
<proteinExistence type="evidence at protein level"/>
<comment type="function">
    <text evidence="1">May be involved in formation or transport of the nucleocapsid-containing vesicles around the nuclear membrane.</text>
</comment>
<comment type="subcellular location">
    <subcellularLocation>
        <location evidence="1 2">Host cytoplasm</location>
    </subcellularLocation>
    <text evidence="1 2">Localizes predominantly close around the host nuclear membrane.</text>
</comment>
<comment type="PTM">
    <text evidence="2">Glycosylated.</text>
</comment>
<reference key="1">
    <citation type="journal article" date="1987" name="J. Virol.">
        <title>Overlapping sets of viral RNAs reflect the array of polypeptides in the EcoRI J and N fragments (map positions 81.2 to 85.0) of the Autographa californica nuclear polyhedrosis virus genome.</title>
        <authorList>
            <person name="Oellig C."/>
            <person name="Happ B."/>
            <person name="Mueller T."/>
            <person name="Doerfler W."/>
        </authorList>
    </citation>
    <scope>NUCLEOTIDE SEQUENCE [GENOMIC DNA]</scope>
</reference>
<reference key="2">
    <citation type="journal article" date="1994" name="Virology">
        <title>The complete DNA sequence of Autographa californica nuclear polyhedrosis virus.</title>
        <authorList>
            <person name="Ayres M.D."/>
            <person name="Howard S.C."/>
            <person name="Kuzio J."/>
            <person name="Lopez-Ferber M."/>
            <person name="Possee R.D."/>
        </authorList>
    </citation>
    <scope>NUCLEOTIDE SEQUENCE [LARGE SCALE GENOMIC DNA]</scope>
    <source>
        <strain>C6</strain>
    </source>
</reference>
<reference key="3">
    <citation type="journal article" date="1993" name="Virology">
        <title>A baculovirus encoded 16-kDa glycoprotein localizes near the nuclear membrane of infected cells.</title>
        <authorList>
            <person name="Gross C.H."/>
            <person name="Wolgamot G.M."/>
            <person name="Russell R.L."/>
            <person name="Pearson M.N."/>
            <person name="Rohrmann G.F."/>
        </authorList>
    </citation>
    <scope>SUBCELLULAR LOCATION</scope>
    <scope>GLYCOSYLATION</scope>
</reference>
<reference key="4">
    <citation type="journal article" date="2014" name="Virology">
        <title>Functional characterization of Autographa californica multiple nucleopolyhedrovirus gp16 (ac130).</title>
        <authorList>
            <person name="Yang M."/>
            <person name="Huang C."/>
            <person name="Qian D.D."/>
            <person name="Li L.L."/>
        </authorList>
    </citation>
    <scope>FUNCTION</scope>
    <scope>SUBCELLULAR LOCATION</scope>
</reference>
<accession>P24729</accession>
<dbReference type="EMBL" id="M17548">
    <property type="protein sequence ID" value="AAA66804.1"/>
    <property type="molecule type" value="Genomic_DNA"/>
</dbReference>
<dbReference type="EMBL" id="L22858">
    <property type="protein sequence ID" value="AAA66760.1"/>
    <property type="molecule type" value="Genomic_DNA"/>
</dbReference>
<dbReference type="PIR" id="C72866">
    <property type="entry name" value="C72866"/>
</dbReference>
<dbReference type="SMR" id="P24729"/>
<dbReference type="KEGG" id="vg:1403963"/>
<dbReference type="OrthoDB" id="18400at10239"/>
<dbReference type="Proteomes" id="UP000008292">
    <property type="component" value="Segment"/>
</dbReference>
<dbReference type="GO" id="GO:0030430">
    <property type="term" value="C:host cell cytoplasm"/>
    <property type="evidence" value="ECO:0007669"/>
    <property type="project" value="UniProtKB-SubCell"/>
</dbReference>
<protein>
    <recommendedName>
        <fullName>Glycoprotein GP16</fullName>
    </recommendedName>
</protein>
<keyword id="KW-0325">Glycoprotein</keyword>
<keyword id="KW-1035">Host cytoplasm</keyword>
<keyword id="KW-0426">Late protein</keyword>
<keyword id="KW-1185">Reference proteome</keyword>
<sequence length="106" mass="12112">MNFWATFSICLVGYLVYAGHLNNELQEIKSILVVMYESMEKHFSNVVDEIDSLKTDTFMMLSNLQNNTIRTWDAVVKNGKKISNLDEKINVLLTKNGVVNNVLNVQ</sequence>